<accession>A6QCE0</accession>
<keyword id="KW-0997">Cell inner membrane</keyword>
<keyword id="KW-1003">Cell membrane</keyword>
<keyword id="KW-0472">Membrane</keyword>
<keyword id="KW-0653">Protein transport</keyword>
<keyword id="KW-0811">Translocation</keyword>
<keyword id="KW-0812">Transmembrane</keyword>
<keyword id="KW-1133">Transmembrane helix</keyword>
<keyword id="KW-0813">Transport</keyword>
<reference key="1">
    <citation type="journal article" date="2007" name="Proc. Natl. Acad. Sci. U.S.A.">
        <title>Deep-sea vent epsilon-proteobacterial genomes provide insights into emergence of pathogens.</title>
        <authorList>
            <person name="Nakagawa S."/>
            <person name="Takaki Y."/>
            <person name="Shimamura S."/>
            <person name="Reysenbach A.-L."/>
            <person name="Takai K."/>
            <person name="Horikoshi K."/>
        </authorList>
    </citation>
    <scope>NUCLEOTIDE SEQUENCE [LARGE SCALE GENOMIC DNA]</scope>
    <source>
        <strain>NBC37-1</strain>
    </source>
</reference>
<comment type="function">
    <text evidence="1">Part of the twin-arginine translocation (Tat) system that transports large folded proteins containing a characteristic twin-arginine motif in their signal peptide across membranes. TatA could form the protein-conducting channel of the Tat system.</text>
</comment>
<comment type="subunit">
    <text evidence="1">The Tat system comprises two distinct complexes: a TatABC complex, containing multiple copies of TatA, TatB and TatC subunits, and a separate TatA complex, containing only TatA subunits. Substrates initially bind to the TatABC complex, which probably triggers association of the separate TatA complex to form the active translocon.</text>
</comment>
<comment type="subcellular location">
    <subcellularLocation>
        <location evidence="1">Cell inner membrane</location>
        <topology evidence="1">Single-pass membrane protein</topology>
    </subcellularLocation>
</comment>
<comment type="similarity">
    <text evidence="1">Belongs to the TatA/E family.</text>
</comment>
<proteinExistence type="inferred from homology"/>
<sequence length="75" mass="8256">MGMPSMPELLIVLAIVVLLFGAKKIPDLAKGMGKGIKDFKKAIKEDDEEEEVKEITKKEEPKVEAAAEEKKSENA</sequence>
<name>TATA_SULNB</name>
<gene>
    <name evidence="1" type="primary">tatA</name>
    <name type="ordered locus">SUN_2209</name>
</gene>
<feature type="chain" id="PRO_1000058970" description="Sec-independent protein translocase protein TatA">
    <location>
        <begin position="1"/>
        <end position="75"/>
    </location>
</feature>
<feature type="transmembrane region" description="Helical" evidence="1">
    <location>
        <begin position="1"/>
        <end position="21"/>
    </location>
</feature>
<feature type="region of interest" description="Disordered" evidence="2">
    <location>
        <begin position="47"/>
        <end position="75"/>
    </location>
</feature>
<feature type="compositionally biased region" description="Basic and acidic residues" evidence="2">
    <location>
        <begin position="53"/>
        <end position="75"/>
    </location>
</feature>
<evidence type="ECO:0000255" key="1">
    <source>
        <dbReference type="HAMAP-Rule" id="MF_00236"/>
    </source>
</evidence>
<evidence type="ECO:0000256" key="2">
    <source>
        <dbReference type="SAM" id="MobiDB-lite"/>
    </source>
</evidence>
<dbReference type="EMBL" id="AP009179">
    <property type="protein sequence ID" value="BAF73149.1"/>
    <property type="molecule type" value="Genomic_DNA"/>
</dbReference>
<dbReference type="RefSeq" id="WP_012083983.1">
    <property type="nucleotide sequence ID" value="NC_009663.1"/>
</dbReference>
<dbReference type="SMR" id="A6QCE0"/>
<dbReference type="STRING" id="387093.SUN_2209"/>
<dbReference type="KEGG" id="sun:SUN_2209"/>
<dbReference type="eggNOG" id="COG1826">
    <property type="taxonomic scope" value="Bacteria"/>
</dbReference>
<dbReference type="HOGENOM" id="CLU_086034_5_4_7"/>
<dbReference type="Proteomes" id="UP000006378">
    <property type="component" value="Chromosome"/>
</dbReference>
<dbReference type="GO" id="GO:0033281">
    <property type="term" value="C:TAT protein transport complex"/>
    <property type="evidence" value="ECO:0007669"/>
    <property type="project" value="UniProtKB-UniRule"/>
</dbReference>
<dbReference type="GO" id="GO:0008320">
    <property type="term" value="F:protein transmembrane transporter activity"/>
    <property type="evidence" value="ECO:0007669"/>
    <property type="project" value="UniProtKB-UniRule"/>
</dbReference>
<dbReference type="GO" id="GO:0043953">
    <property type="term" value="P:protein transport by the Tat complex"/>
    <property type="evidence" value="ECO:0007669"/>
    <property type="project" value="UniProtKB-UniRule"/>
</dbReference>
<dbReference type="Gene3D" id="1.20.5.3310">
    <property type="match status" value="1"/>
</dbReference>
<dbReference type="HAMAP" id="MF_00236">
    <property type="entry name" value="TatA_E"/>
    <property type="match status" value="1"/>
</dbReference>
<dbReference type="InterPro" id="IPR003369">
    <property type="entry name" value="TatA/B/E"/>
</dbReference>
<dbReference type="InterPro" id="IPR006312">
    <property type="entry name" value="TatA/E"/>
</dbReference>
<dbReference type="NCBIfam" id="TIGR01411">
    <property type="entry name" value="tatAE"/>
    <property type="match status" value="1"/>
</dbReference>
<dbReference type="PANTHER" id="PTHR42982">
    <property type="entry name" value="SEC-INDEPENDENT PROTEIN TRANSLOCASE PROTEIN TATA"/>
    <property type="match status" value="1"/>
</dbReference>
<dbReference type="PANTHER" id="PTHR42982:SF1">
    <property type="entry name" value="SEC-INDEPENDENT PROTEIN TRANSLOCASE PROTEIN TATA"/>
    <property type="match status" value="1"/>
</dbReference>
<dbReference type="Pfam" id="PF02416">
    <property type="entry name" value="TatA_B_E"/>
    <property type="match status" value="1"/>
</dbReference>
<protein>
    <recommendedName>
        <fullName evidence="1">Sec-independent protein translocase protein TatA</fullName>
    </recommendedName>
</protein>
<organism>
    <name type="scientific">Sulfurovum sp. (strain NBC37-1)</name>
    <dbReference type="NCBI Taxonomy" id="387093"/>
    <lineage>
        <taxon>Bacteria</taxon>
        <taxon>Pseudomonadati</taxon>
        <taxon>Campylobacterota</taxon>
        <taxon>Epsilonproteobacteria</taxon>
        <taxon>Campylobacterales</taxon>
        <taxon>Sulfurovaceae</taxon>
        <taxon>Sulfurovum</taxon>
    </lineage>
</organism>